<protein>
    <recommendedName>
        <fullName evidence="1">Probable protein kinase UbiB</fullName>
        <ecNumber evidence="1">2.7.-.-</ecNumber>
    </recommendedName>
    <alternativeName>
        <fullName evidence="1">Ubiquinone biosynthesis protein UbiB</fullName>
    </alternativeName>
</protein>
<reference key="1">
    <citation type="journal article" date="2002" name="Nature">
        <title>Comparison of the genomes of two Xanthomonas pathogens with differing host specificities.</title>
        <authorList>
            <person name="da Silva A.C.R."/>
            <person name="Ferro J.A."/>
            <person name="Reinach F.C."/>
            <person name="Farah C.S."/>
            <person name="Furlan L.R."/>
            <person name="Quaggio R.B."/>
            <person name="Monteiro-Vitorello C.B."/>
            <person name="Van Sluys M.A."/>
            <person name="Almeida N.F. Jr."/>
            <person name="Alves L.M.C."/>
            <person name="do Amaral A.M."/>
            <person name="Bertolini M.C."/>
            <person name="Camargo L.E.A."/>
            <person name="Camarotte G."/>
            <person name="Cannavan F."/>
            <person name="Cardozo J."/>
            <person name="Chambergo F."/>
            <person name="Ciapina L.P."/>
            <person name="Cicarelli R.M.B."/>
            <person name="Coutinho L.L."/>
            <person name="Cursino-Santos J.R."/>
            <person name="El-Dorry H."/>
            <person name="Faria J.B."/>
            <person name="Ferreira A.J.S."/>
            <person name="Ferreira R.C.C."/>
            <person name="Ferro M.I.T."/>
            <person name="Formighieri E.F."/>
            <person name="Franco M.C."/>
            <person name="Greggio C.C."/>
            <person name="Gruber A."/>
            <person name="Katsuyama A.M."/>
            <person name="Kishi L.T."/>
            <person name="Leite R.P."/>
            <person name="Lemos E.G.M."/>
            <person name="Lemos M.V.F."/>
            <person name="Locali E.C."/>
            <person name="Machado M.A."/>
            <person name="Madeira A.M.B.N."/>
            <person name="Martinez-Rossi N.M."/>
            <person name="Martins E.C."/>
            <person name="Meidanis J."/>
            <person name="Menck C.F.M."/>
            <person name="Miyaki C.Y."/>
            <person name="Moon D.H."/>
            <person name="Moreira L.M."/>
            <person name="Novo M.T.M."/>
            <person name="Okura V.K."/>
            <person name="Oliveira M.C."/>
            <person name="Oliveira V.R."/>
            <person name="Pereira H.A."/>
            <person name="Rossi A."/>
            <person name="Sena J.A.D."/>
            <person name="Silva C."/>
            <person name="de Souza R.F."/>
            <person name="Spinola L.A.F."/>
            <person name="Takita M.A."/>
            <person name="Tamura R.E."/>
            <person name="Teixeira E.C."/>
            <person name="Tezza R.I.D."/>
            <person name="Trindade dos Santos M."/>
            <person name="Truffi D."/>
            <person name="Tsai S.M."/>
            <person name="White F.F."/>
            <person name="Setubal J.C."/>
            <person name="Kitajima J.P."/>
        </authorList>
    </citation>
    <scope>NUCLEOTIDE SEQUENCE [LARGE SCALE GENOMIC DNA]</scope>
    <source>
        <strain>306</strain>
    </source>
</reference>
<feature type="chain" id="PRO_0000200724" description="Probable protein kinase UbiB">
    <location>
        <begin position="1"/>
        <end position="557"/>
    </location>
</feature>
<feature type="transmembrane region" description="Helical" evidence="1">
    <location>
        <begin position="506"/>
        <end position="526"/>
    </location>
</feature>
<feature type="transmembrane region" description="Helical" evidence="1">
    <location>
        <begin position="535"/>
        <end position="555"/>
    </location>
</feature>
<feature type="domain" description="Protein kinase" evidence="1">
    <location>
        <begin position="121"/>
        <end position="509"/>
    </location>
</feature>
<feature type="active site" description="Proton acceptor" evidence="1">
    <location>
        <position position="289"/>
    </location>
</feature>
<feature type="binding site" evidence="1">
    <location>
        <begin position="127"/>
        <end position="135"/>
    </location>
    <ligand>
        <name>ATP</name>
        <dbReference type="ChEBI" id="CHEBI:30616"/>
    </ligand>
</feature>
<feature type="binding site" evidence="1">
    <location>
        <position position="154"/>
    </location>
    <ligand>
        <name>ATP</name>
        <dbReference type="ChEBI" id="CHEBI:30616"/>
    </ligand>
</feature>
<name>UBIB_XANAC</name>
<gene>
    <name evidence="1" type="primary">ubiB</name>
    <name type="synonym">aarF</name>
    <name type="ordered locus">XAC0242</name>
</gene>
<proteinExistence type="inferred from homology"/>
<comment type="function">
    <text evidence="1">Is probably a protein kinase regulator of UbiI activity which is involved in aerobic coenzyme Q (ubiquinone) biosynthesis.</text>
</comment>
<comment type="pathway">
    <text>Cofactor biosynthesis; ubiquinone biosynthesis [regulation].</text>
</comment>
<comment type="subcellular location">
    <subcellularLocation>
        <location evidence="1">Cell inner membrane</location>
        <topology evidence="1">Multi-pass membrane protein</topology>
    </subcellularLocation>
</comment>
<comment type="similarity">
    <text evidence="1">Belongs to the ABC1 family. UbiB subfamily.</text>
</comment>
<evidence type="ECO:0000255" key="1">
    <source>
        <dbReference type="HAMAP-Rule" id="MF_00414"/>
    </source>
</evidence>
<sequence length="557" mass="62634">MKAILRASRIGRVILRYRLDALLEGTPAERWLRLAKPFVPRASAEIAAQSRGARLRLALQELGPIFVKFGQILSTRRDLIPADVAEELTLLQDRVKPFDGQAARLIVEAALGLPVSVAFASFDTVPLASASIAQVHAATLPPDANGVRREVVVKVLRPEIERQIDADIALLHSLATLVERTHPRADKIRPREVVAEIEGTLAAELDLQREGANASVLRRFWEGSDDLYVPEVIWSHTAERALTLERVYGIPSDDIAKLDAAGIDRKALAAKGVRVFYTQVFRDNFFHADAHAGNIWVDSDPERRLNPRFIALDFGIMGQLSQEDQYYLAENFMAIFHKDYRRMAELHVEAGWMPSNVRIDELEAAARSVCEPYFNRPLSEISLAQVLIKLFRVAQRYELTLQPQLILLQKTLLNIEGVGRQLDPRLDIWAVARPVLERILRERYSPRRVLRELSKRLPEIMTHAPDMPRLVYSWLTQQVEGRHQIAIRSPELLALDLSLRKLQTRVVTAITGSGLLVVAAVLYGLHPDGWYLGTVPVWSWISGGAGSAALLVAWLRR</sequence>
<keyword id="KW-0067">ATP-binding</keyword>
<keyword id="KW-0997">Cell inner membrane</keyword>
<keyword id="KW-1003">Cell membrane</keyword>
<keyword id="KW-0418">Kinase</keyword>
<keyword id="KW-0472">Membrane</keyword>
<keyword id="KW-0547">Nucleotide-binding</keyword>
<keyword id="KW-0808">Transferase</keyword>
<keyword id="KW-0812">Transmembrane</keyword>
<keyword id="KW-1133">Transmembrane helix</keyword>
<keyword id="KW-0831">Ubiquinone biosynthesis</keyword>
<accession>Q8PQT0</accession>
<dbReference type="EC" id="2.7.-.-" evidence="1"/>
<dbReference type="EMBL" id="AE008923">
    <property type="protein sequence ID" value="AAM35134.1"/>
    <property type="molecule type" value="Genomic_DNA"/>
</dbReference>
<dbReference type="RefSeq" id="WP_011050186.1">
    <property type="nucleotide sequence ID" value="NC_003919.1"/>
</dbReference>
<dbReference type="SMR" id="Q8PQT0"/>
<dbReference type="GeneID" id="66909454"/>
<dbReference type="KEGG" id="xac:XAC0242"/>
<dbReference type="eggNOG" id="COG0661">
    <property type="taxonomic scope" value="Bacteria"/>
</dbReference>
<dbReference type="HOGENOM" id="CLU_006533_0_0_6"/>
<dbReference type="UniPathway" id="UPA00232"/>
<dbReference type="Proteomes" id="UP000000576">
    <property type="component" value="Chromosome"/>
</dbReference>
<dbReference type="GO" id="GO:0005886">
    <property type="term" value="C:plasma membrane"/>
    <property type="evidence" value="ECO:0007669"/>
    <property type="project" value="UniProtKB-SubCell"/>
</dbReference>
<dbReference type="GO" id="GO:0005524">
    <property type="term" value="F:ATP binding"/>
    <property type="evidence" value="ECO:0007669"/>
    <property type="project" value="UniProtKB-KW"/>
</dbReference>
<dbReference type="GO" id="GO:0004672">
    <property type="term" value="F:protein kinase activity"/>
    <property type="evidence" value="ECO:0007669"/>
    <property type="project" value="UniProtKB-UniRule"/>
</dbReference>
<dbReference type="GO" id="GO:0010795">
    <property type="term" value="P:regulation of ubiquinone biosynthetic process"/>
    <property type="evidence" value="ECO:0007669"/>
    <property type="project" value="UniProtKB-UniRule"/>
</dbReference>
<dbReference type="GO" id="GO:0006744">
    <property type="term" value="P:ubiquinone biosynthetic process"/>
    <property type="evidence" value="ECO:0007669"/>
    <property type="project" value="UniProtKB-UniPathway"/>
</dbReference>
<dbReference type="CDD" id="cd13972">
    <property type="entry name" value="UbiB"/>
    <property type="match status" value="1"/>
</dbReference>
<dbReference type="HAMAP" id="MF_00414">
    <property type="entry name" value="UbiB"/>
    <property type="match status" value="1"/>
</dbReference>
<dbReference type="InterPro" id="IPR004147">
    <property type="entry name" value="ABC1_dom"/>
</dbReference>
<dbReference type="InterPro" id="IPR011009">
    <property type="entry name" value="Kinase-like_dom_sf"/>
</dbReference>
<dbReference type="InterPro" id="IPR010232">
    <property type="entry name" value="UbiB"/>
</dbReference>
<dbReference type="InterPro" id="IPR045308">
    <property type="entry name" value="UbiB_bact"/>
</dbReference>
<dbReference type="InterPro" id="IPR050154">
    <property type="entry name" value="UbiB_kinase"/>
</dbReference>
<dbReference type="NCBIfam" id="NF003404">
    <property type="entry name" value="PRK04750.1"/>
    <property type="match status" value="1"/>
</dbReference>
<dbReference type="NCBIfam" id="TIGR01982">
    <property type="entry name" value="UbiB"/>
    <property type="match status" value="1"/>
</dbReference>
<dbReference type="PANTHER" id="PTHR10566">
    <property type="entry name" value="CHAPERONE-ACTIVITY OF BC1 COMPLEX CABC1 -RELATED"/>
    <property type="match status" value="1"/>
</dbReference>
<dbReference type="PANTHER" id="PTHR10566:SF113">
    <property type="entry name" value="PROTEIN ACTIVITY OF BC1 COMPLEX KINASE 7, CHLOROPLASTIC"/>
    <property type="match status" value="1"/>
</dbReference>
<dbReference type="Pfam" id="PF03109">
    <property type="entry name" value="ABC1"/>
    <property type="match status" value="1"/>
</dbReference>
<dbReference type="SUPFAM" id="SSF56112">
    <property type="entry name" value="Protein kinase-like (PK-like)"/>
    <property type="match status" value="1"/>
</dbReference>
<organism>
    <name type="scientific">Xanthomonas axonopodis pv. citri (strain 306)</name>
    <dbReference type="NCBI Taxonomy" id="190486"/>
    <lineage>
        <taxon>Bacteria</taxon>
        <taxon>Pseudomonadati</taxon>
        <taxon>Pseudomonadota</taxon>
        <taxon>Gammaproteobacteria</taxon>
        <taxon>Lysobacterales</taxon>
        <taxon>Lysobacteraceae</taxon>
        <taxon>Xanthomonas</taxon>
    </lineage>
</organism>